<proteinExistence type="inferred from homology"/>
<protein>
    <recommendedName>
        <fullName evidence="2">tRNA (guanine-N(7)-)-methyltransferase</fullName>
        <ecNumber evidence="2">2.1.1.33</ecNumber>
    </recommendedName>
    <alternativeName>
        <fullName evidence="2">tRNA (guanine(46)-N(7))-methyltransferase</fullName>
    </alternativeName>
    <alternativeName>
        <fullName evidence="2">tRNA(m7G46)-methyltransferase</fullName>
    </alternativeName>
</protein>
<dbReference type="EC" id="2.1.1.33" evidence="2"/>
<dbReference type="EMBL" id="CP000627">
    <property type="protein sequence ID" value="ABQ21382.1"/>
    <property type="molecule type" value="Genomic_DNA"/>
</dbReference>
<dbReference type="EMBL" id="CP001235">
    <property type="protein sequence ID" value="ACP08516.1"/>
    <property type="molecule type" value="Genomic_DNA"/>
</dbReference>
<dbReference type="RefSeq" id="WP_000005583.1">
    <property type="nucleotide sequence ID" value="NZ_JAACZH010000015.1"/>
</dbReference>
<dbReference type="SMR" id="A5F9I8"/>
<dbReference type="KEGG" id="vco:VC0395_A0005"/>
<dbReference type="KEGG" id="vcr:VC395_0497"/>
<dbReference type="PATRIC" id="fig|345073.21.peg.484"/>
<dbReference type="eggNOG" id="COG0220">
    <property type="taxonomic scope" value="Bacteria"/>
</dbReference>
<dbReference type="HOGENOM" id="CLU_050910_0_1_6"/>
<dbReference type="OrthoDB" id="9802090at2"/>
<dbReference type="UniPathway" id="UPA00989"/>
<dbReference type="Proteomes" id="UP000000249">
    <property type="component" value="Chromosome 2"/>
</dbReference>
<dbReference type="GO" id="GO:0043527">
    <property type="term" value="C:tRNA methyltransferase complex"/>
    <property type="evidence" value="ECO:0007669"/>
    <property type="project" value="TreeGrafter"/>
</dbReference>
<dbReference type="GO" id="GO:0008176">
    <property type="term" value="F:tRNA (guanine(46)-N7)-methyltransferase activity"/>
    <property type="evidence" value="ECO:0007669"/>
    <property type="project" value="UniProtKB-UniRule"/>
</dbReference>
<dbReference type="FunFam" id="3.40.50.150:FF:000024">
    <property type="entry name" value="tRNA (guanine-N(7)-)-methyltransferase"/>
    <property type="match status" value="1"/>
</dbReference>
<dbReference type="Gene3D" id="3.40.50.150">
    <property type="entry name" value="Vaccinia Virus protein VP39"/>
    <property type="match status" value="1"/>
</dbReference>
<dbReference type="HAMAP" id="MF_01057">
    <property type="entry name" value="tRNA_methyltr_TrmB"/>
    <property type="match status" value="1"/>
</dbReference>
<dbReference type="InterPro" id="IPR029063">
    <property type="entry name" value="SAM-dependent_MTases_sf"/>
</dbReference>
<dbReference type="InterPro" id="IPR003358">
    <property type="entry name" value="tRNA_(Gua-N-7)_MeTrfase_Trmb"/>
</dbReference>
<dbReference type="InterPro" id="IPR055361">
    <property type="entry name" value="tRNA_methyltr_TrmB_bact"/>
</dbReference>
<dbReference type="NCBIfam" id="TIGR00091">
    <property type="entry name" value="tRNA (guanosine(46)-N7)-methyltransferase TrmB"/>
    <property type="match status" value="1"/>
</dbReference>
<dbReference type="PANTHER" id="PTHR23417">
    <property type="entry name" value="3-DEOXY-D-MANNO-OCTULOSONIC-ACID TRANSFERASE/TRNA GUANINE-N 7 - -METHYLTRANSFERASE"/>
    <property type="match status" value="1"/>
</dbReference>
<dbReference type="PANTHER" id="PTHR23417:SF14">
    <property type="entry name" value="PENTACOTRIPEPTIDE-REPEAT REGION OF PRORP DOMAIN-CONTAINING PROTEIN"/>
    <property type="match status" value="1"/>
</dbReference>
<dbReference type="Pfam" id="PF02390">
    <property type="entry name" value="Methyltransf_4"/>
    <property type="match status" value="1"/>
</dbReference>
<dbReference type="SUPFAM" id="SSF53335">
    <property type="entry name" value="S-adenosyl-L-methionine-dependent methyltransferases"/>
    <property type="match status" value="1"/>
</dbReference>
<dbReference type="PROSITE" id="PS51625">
    <property type="entry name" value="SAM_MT_TRMB"/>
    <property type="match status" value="1"/>
</dbReference>
<name>TRMB_VIBC3</name>
<sequence length="239" mass="27311">MSEVITQEYTEDGKVLRRIRSFVRREGRLTKGQEAAMKECWPTMGIDYQPELLDWQQVFGNDNPVVLEIGFGMGASLVEMAKNAPEKNFLGIEVHSPGVGACLASAREAGVTNLRVMCHDAVEVFAHMIPDNSLHTLQLFFPDPWHKKRHHKRRIVQLEFAEMVRQKLIIGSGVFHMATDWENYAEHMVEVMNQAPGFANLATDGDYIPRPDERPLTKFEQRGHRLGHGVWDIKYQRTA</sequence>
<feature type="chain" id="PRO_1000072998" description="tRNA (guanine-N(7)-)-methyltransferase">
    <location>
        <begin position="1"/>
        <end position="239"/>
    </location>
</feature>
<feature type="active site" evidence="1">
    <location>
        <position position="143"/>
    </location>
</feature>
<feature type="binding site" evidence="2">
    <location>
        <position position="68"/>
    </location>
    <ligand>
        <name>S-adenosyl-L-methionine</name>
        <dbReference type="ChEBI" id="CHEBI:59789"/>
    </ligand>
</feature>
<feature type="binding site" evidence="2">
    <location>
        <position position="93"/>
    </location>
    <ligand>
        <name>S-adenosyl-L-methionine</name>
        <dbReference type="ChEBI" id="CHEBI:59789"/>
    </ligand>
</feature>
<feature type="binding site" evidence="2">
    <location>
        <position position="120"/>
    </location>
    <ligand>
        <name>S-adenosyl-L-methionine</name>
        <dbReference type="ChEBI" id="CHEBI:59789"/>
    </ligand>
</feature>
<feature type="binding site" evidence="2">
    <location>
        <position position="143"/>
    </location>
    <ligand>
        <name>S-adenosyl-L-methionine</name>
        <dbReference type="ChEBI" id="CHEBI:59789"/>
    </ligand>
</feature>
<feature type="binding site" evidence="2">
    <location>
        <position position="147"/>
    </location>
    <ligand>
        <name>substrate</name>
    </ligand>
</feature>
<feature type="binding site" evidence="2">
    <location>
        <position position="180"/>
    </location>
    <ligand>
        <name>substrate</name>
    </ligand>
</feature>
<feature type="binding site" evidence="2">
    <location>
        <begin position="217"/>
        <end position="220"/>
    </location>
    <ligand>
        <name>substrate</name>
    </ligand>
</feature>
<keyword id="KW-0489">Methyltransferase</keyword>
<keyword id="KW-0949">S-adenosyl-L-methionine</keyword>
<keyword id="KW-0808">Transferase</keyword>
<keyword id="KW-0819">tRNA processing</keyword>
<accession>A5F9I8</accession>
<accession>C3M4P4</accession>
<comment type="function">
    <text evidence="2">Catalyzes the formation of N(7)-methylguanine at position 46 (m7G46) in tRNA.</text>
</comment>
<comment type="catalytic activity">
    <reaction evidence="2">
        <text>guanosine(46) in tRNA + S-adenosyl-L-methionine = N(7)-methylguanosine(46) in tRNA + S-adenosyl-L-homocysteine</text>
        <dbReference type="Rhea" id="RHEA:42708"/>
        <dbReference type="Rhea" id="RHEA-COMP:10188"/>
        <dbReference type="Rhea" id="RHEA-COMP:10189"/>
        <dbReference type="ChEBI" id="CHEBI:57856"/>
        <dbReference type="ChEBI" id="CHEBI:59789"/>
        <dbReference type="ChEBI" id="CHEBI:74269"/>
        <dbReference type="ChEBI" id="CHEBI:74480"/>
        <dbReference type="EC" id="2.1.1.33"/>
    </reaction>
</comment>
<comment type="pathway">
    <text evidence="2">tRNA modification; N(7)-methylguanine-tRNA biosynthesis.</text>
</comment>
<comment type="similarity">
    <text evidence="2">Belongs to the class I-like SAM-binding methyltransferase superfamily. TrmB family.</text>
</comment>
<evidence type="ECO:0000250" key="1"/>
<evidence type="ECO:0000255" key="2">
    <source>
        <dbReference type="HAMAP-Rule" id="MF_01057"/>
    </source>
</evidence>
<organism>
    <name type="scientific">Vibrio cholerae serotype O1 (strain ATCC 39541 / Classical Ogawa 395 / O395)</name>
    <dbReference type="NCBI Taxonomy" id="345073"/>
    <lineage>
        <taxon>Bacteria</taxon>
        <taxon>Pseudomonadati</taxon>
        <taxon>Pseudomonadota</taxon>
        <taxon>Gammaproteobacteria</taxon>
        <taxon>Vibrionales</taxon>
        <taxon>Vibrionaceae</taxon>
        <taxon>Vibrio</taxon>
    </lineage>
</organism>
<reference key="1">
    <citation type="submission" date="2007-03" db="EMBL/GenBank/DDBJ databases">
        <authorList>
            <person name="Heidelberg J."/>
        </authorList>
    </citation>
    <scope>NUCLEOTIDE SEQUENCE [LARGE SCALE GENOMIC DNA]</scope>
    <source>
        <strain>ATCC 39541 / Classical Ogawa 395 / O395</strain>
    </source>
</reference>
<reference key="2">
    <citation type="journal article" date="2008" name="PLoS ONE">
        <title>A recalibrated molecular clock and independent origins for the cholera pandemic clones.</title>
        <authorList>
            <person name="Feng L."/>
            <person name="Reeves P.R."/>
            <person name="Lan R."/>
            <person name="Ren Y."/>
            <person name="Gao C."/>
            <person name="Zhou Z."/>
            <person name="Ren Y."/>
            <person name="Cheng J."/>
            <person name="Wang W."/>
            <person name="Wang J."/>
            <person name="Qian W."/>
            <person name="Li D."/>
            <person name="Wang L."/>
        </authorList>
    </citation>
    <scope>NUCLEOTIDE SEQUENCE [LARGE SCALE GENOMIC DNA]</scope>
    <source>
        <strain>ATCC 39541 / Classical Ogawa 395 / O395</strain>
    </source>
</reference>
<gene>
    <name evidence="2" type="primary">trmB</name>
    <name type="ordered locus">VC0395_A0005</name>
    <name type="ordered locus">VC395_0497</name>
</gene>